<protein>
    <recommendedName>
        <fullName>Putative cytochrome P450 family member 4F30</fullName>
    </recommendedName>
</protein>
<evidence type="ECO:0000256" key="1">
    <source>
        <dbReference type="SAM" id="MobiDB-lite"/>
    </source>
</evidence>
<evidence type="ECO:0000305" key="2"/>
<dbReference type="EMBL" id="AC140481">
    <property type="status" value="NOT_ANNOTATED_CDS"/>
    <property type="molecule type" value="Genomic_DNA"/>
</dbReference>
<dbReference type="EMBL" id="AL136789">
    <property type="protein sequence ID" value="CAB66723.1"/>
    <property type="molecule type" value="mRNA"/>
</dbReference>
<dbReference type="GlyGen" id="Q9H0H9">
    <property type="glycosylation" value="2 sites"/>
</dbReference>
<dbReference type="iPTMnet" id="Q9H0H9"/>
<dbReference type="PhosphoSitePlus" id="Q9H0H9"/>
<dbReference type="BioMuta" id="HGNC:25270"/>
<dbReference type="MassIVE" id="Q9H0H9"/>
<dbReference type="AGR" id="HGNC:25270"/>
<dbReference type="GeneCards" id="CYP4F30P"/>
<dbReference type="HGNC" id="HGNC:25270">
    <property type="gene designation" value="CYP4F30P"/>
</dbReference>
<dbReference type="neXtProt" id="NX_Q9H0H9"/>
<dbReference type="InParanoid" id="Q9H0H9"/>
<dbReference type="PAN-GO" id="Q9H0H9">
    <property type="GO annotations" value="0 GO annotations based on evolutionary models"/>
</dbReference>
<dbReference type="PhylomeDB" id="Q9H0H9"/>
<dbReference type="Pharos" id="Q9H0H9">
    <property type="development level" value="Tdark"/>
</dbReference>
<dbReference type="Proteomes" id="UP000005640">
    <property type="component" value="Unplaced"/>
</dbReference>
<dbReference type="RNAct" id="Q9H0H9">
    <property type="molecule type" value="protein"/>
</dbReference>
<organism>
    <name type="scientific">Homo sapiens</name>
    <name type="common">Human</name>
    <dbReference type="NCBI Taxonomy" id="9606"/>
    <lineage>
        <taxon>Eukaryota</taxon>
        <taxon>Metazoa</taxon>
        <taxon>Chordata</taxon>
        <taxon>Craniata</taxon>
        <taxon>Vertebrata</taxon>
        <taxon>Euteleostomi</taxon>
        <taxon>Mammalia</taxon>
        <taxon>Eutheria</taxon>
        <taxon>Euarchontoglires</taxon>
        <taxon>Primates</taxon>
        <taxon>Haplorrhini</taxon>
        <taxon>Catarrhini</taxon>
        <taxon>Hominidae</taxon>
        <taxon>Homo</taxon>
    </lineage>
</organism>
<keyword id="KW-1185">Reference proteome</keyword>
<sequence length="118" mass="12413">MVTPAGCLGGRNQGPREIPGTAFPCSSRAGQTGQAVSGAQVSSWRERQPFGGSRGPLHILGTDGNVDTTGKLGLVPTPPRIQKETKQGALCGMKPPFLPEALLTVWWLPFVAVSLCLF</sequence>
<proteinExistence type="uncertain"/>
<accession>Q9H0H9</accession>
<feature type="chain" id="PRO_0000089344" description="Putative cytochrome P450 family member 4F30">
    <location>
        <begin position="1"/>
        <end position="118"/>
    </location>
</feature>
<feature type="region of interest" description="Disordered" evidence="1">
    <location>
        <begin position="1"/>
        <end position="64"/>
    </location>
</feature>
<feature type="compositionally biased region" description="Polar residues" evidence="1">
    <location>
        <begin position="28"/>
        <end position="43"/>
    </location>
</feature>
<gene>
    <name type="primary">CYP4F30P</name>
    <name type="synonym">C2orf14</name>
</gene>
<name>C4F30_HUMAN</name>
<reference key="1">
    <citation type="journal article" date="2005" name="Nature">
        <title>Generation and annotation of the DNA sequences of human chromosomes 2 and 4.</title>
        <authorList>
            <person name="Hillier L.W."/>
            <person name="Graves T.A."/>
            <person name="Fulton R.S."/>
            <person name="Fulton L.A."/>
            <person name="Pepin K.H."/>
            <person name="Minx P."/>
            <person name="Wagner-McPherson C."/>
            <person name="Layman D."/>
            <person name="Wylie K."/>
            <person name="Sekhon M."/>
            <person name="Becker M.C."/>
            <person name="Fewell G.A."/>
            <person name="Delehaunty K.D."/>
            <person name="Miner T.L."/>
            <person name="Nash W.E."/>
            <person name="Kremitzki C."/>
            <person name="Oddy L."/>
            <person name="Du H."/>
            <person name="Sun H."/>
            <person name="Bradshaw-Cordum H."/>
            <person name="Ali J."/>
            <person name="Carter J."/>
            <person name="Cordes M."/>
            <person name="Harris A."/>
            <person name="Isak A."/>
            <person name="van Brunt A."/>
            <person name="Nguyen C."/>
            <person name="Du F."/>
            <person name="Courtney L."/>
            <person name="Kalicki J."/>
            <person name="Ozersky P."/>
            <person name="Abbott S."/>
            <person name="Armstrong J."/>
            <person name="Belter E.A."/>
            <person name="Caruso L."/>
            <person name="Cedroni M."/>
            <person name="Cotton M."/>
            <person name="Davidson T."/>
            <person name="Desai A."/>
            <person name="Elliott G."/>
            <person name="Erb T."/>
            <person name="Fronick C."/>
            <person name="Gaige T."/>
            <person name="Haakenson W."/>
            <person name="Haglund K."/>
            <person name="Holmes A."/>
            <person name="Harkins R."/>
            <person name="Kim K."/>
            <person name="Kruchowski S.S."/>
            <person name="Strong C.M."/>
            <person name="Grewal N."/>
            <person name="Goyea E."/>
            <person name="Hou S."/>
            <person name="Levy A."/>
            <person name="Martinka S."/>
            <person name="Mead K."/>
            <person name="McLellan M.D."/>
            <person name="Meyer R."/>
            <person name="Randall-Maher J."/>
            <person name="Tomlinson C."/>
            <person name="Dauphin-Kohlberg S."/>
            <person name="Kozlowicz-Reilly A."/>
            <person name="Shah N."/>
            <person name="Swearengen-Shahid S."/>
            <person name="Snider J."/>
            <person name="Strong J.T."/>
            <person name="Thompson J."/>
            <person name="Yoakum M."/>
            <person name="Leonard S."/>
            <person name="Pearman C."/>
            <person name="Trani L."/>
            <person name="Radionenko M."/>
            <person name="Waligorski J.E."/>
            <person name="Wang C."/>
            <person name="Rock S.M."/>
            <person name="Tin-Wollam A.-M."/>
            <person name="Maupin R."/>
            <person name="Latreille P."/>
            <person name="Wendl M.C."/>
            <person name="Yang S.-P."/>
            <person name="Pohl C."/>
            <person name="Wallis J.W."/>
            <person name="Spieth J."/>
            <person name="Bieri T.A."/>
            <person name="Berkowicz N."/>
            <person name="Nelson J.O."/>
            <person name="Osborne J."/>
            <person name="Ding L."/>
            <person name="Meyer R."/>
            <person name="Sabo A."/>
            <person name="Shotland Y."/>
            <person name="Sinha P."/>
            <person name="Wohldmann P.E."/>
            <person name="Cook L.L."/>
            <person name="Hickenbotham M.T."/>
            <person name="Eldred J."/>
            <person name="Williams D."/>
            <person name="Jones T.A."/>
            <person name="She X."/>
            <person name="Ciccarelli F.D."/>
            <person name="Izaurralde E."/>
            <person name="Taylor J."/>
            <person name="Schmutz J."/>
            <person name="Myers R.M."/>
            <person name="Cox D.R."/>
            <person name="Huang X."/>
            <person name="McPherson J.D."/>
            <person name="Mardis E.R."/>
            <person name="Clifton S.W."/>
            <person name="Warren W.C."/>
            <person name="Chinwalla A.T."/>
            <person name="Eddy S.R."/>
            <person name="Marra M.A."/>
            <person name="Ovcharenko I."/>
            <person name="Furey T.S."/>
            <person name="Miller W."/>
            <person name="Eichler E.E."/>
            <person name="Bork P."/>
            <person name="Suyama M."/>
            <person name="Torrents D."/>
            <person name="Waterston R.H."/>
            <person name="Wilson R.K."/>
        </authorList>
    </citation>
    <scope>NUCLEOTIDE SEQUENCE [LARGE SCALE GENOMIC DNA]</scope>
</reference>
<reference key="2">
    <citation type="journal article" date="2001" name="Genome Res.">
        <title>Towards a catalog of human genes and proteins: sequencing and analysis of 500 novel complete protein coding human cDNAs.</title>
        <authorList>
            <person name="Wiemann S."/>
            <person name="Weil B."/>
            <person name="Wellenreuther R."/>
            <person name="Gassenhuber J."/>
            <person name="Glassl S."/>
            <person name="Ansorge W."/>
            <person name="Boecher M."/>
            <person name="Bloecker H."/>
            <person name="Bauersachs S."/>
            <person name="Blum H."/>
            <person name="Lauber J."/>
            <person name="Duesterhoeft A."/>
            <person name="Beyer A."/>
            <person name="Koehrer K."/>
            <person name="Strack N."/>
            <person name="Mewes H.-W."/>
            <person name="Ottenwaelder B."/>
            <person name="Obermaier B."/>
            <person name="Tampe J."/>
            <person name="Heubner D."/>
            <person name="Wambutt R."/>
            <person name="Korn B."/>
            <person name="Klein M."/>
            <person name="Poustka A."/>
        </authorList>
    </citation>
    <scope>NUCLEOTIDE SEQUENCE [LARGE SCALE MRNA]</scope>
    <source>
        <tissue>Testis</tissue>
    </source>
</reference>
<comment type="caution">
    <text evidence="2">Could be the product of a pseudogene.</text>
</comment>